<organism>
    <name type="scientific">Rippkaea orientalis (strain PCC 8801 / RF-1)</name>
    <name type="common">Cyanothece sp. (strain PCC 8801)</name>
    <dbReference type="NCBI Taxonomy" id="41431"/>
    <lineage>
        <taxon>Bacteria</taxon>
        <taxon>Bacillati</taxon>
        <taxon>Cyanobacteriota</taxon>
        <taxon>Cyanophyceae</taxon>
        <taxon>Oscillatoriophycideae</taxon>
        <taxon>Chroococcales</taxon>
        <taxon>Aphanothecaceae</taxon>
        <taxon>Rippkaea</taxon>
        <taxon>Rippkaea orientalis</taxon>
    </lineage>
</organism>
<sequence>MANSRRVSRVSSLIKREVSQMLLHDIKDDRVGAGMVSVTEVDVSGDLQHATIFVSIYGSEQAQAETMEGLKSSTSFVRRELSHRMRLRRSPEVVFRQDHSLERGDRMVHLLNQIKDTIPEEEGITEEE</sequence>
<keyword id="KW-0963">Cytoplasm</keyword>
<keyword id="KW-1185">Reference proteome</keyword>
<keyword id="KW-0690">Ribosome biogenesis</keyword>
<accession>B7K2E7</accession>
<feature type="chain" id="PRO_1000193248" description="Ribosome-binding factor A">
    <location>
        <begin position="1"/>
        <end position="128"/>
    </location>
</feature>
<reference key="1">
    <citation type="journal article" date="2011" name="MBio">
        <title>Novel metabolic attributes of the genus Cyanothece, comprising a group of unicellular nitrogen-fixing Cyanobacteria.</title>
        <authorList>
            <person name="Bandyopadhyay A."/>
            <person name="Elvitigala T."/>
            <person name="Welsh E."/>
            <person name="Stockel J."/>
            <person name="Liberton M."/>
            <person name="Min H."/>
            <person name="Sherman L.A."/>
            <person name="Pakrasi H.B."/>
        </authorList>
    </citation>
    <scope>NUCLEOTIDE SEQUENCE [LARGE SCALE GENOMIC DNA]</scope>
    <source>
        <strain>PCC 8801 / RF-1</strain>
    </source>
</reference>
<evidence type="ECO:0000255" key="1">
    <source>
        <dbReference type="HAMAP-Rule" id="MF_00003"/>
    </source>
</evidence>
<name>RBFA_RIPO1</name>
<comment type="function">
    <text evidence="1">One of several proteins that assist in the late maturation steps of the functional core of the 30S ribosomal subunit. Associates with free 30S ribosomal subunits (but not with 30S subunits that are part of 70S ribosomes or polysomes). Required for efficient processing of 16S rRNA. May interact with the 5'-terminal helix region of 16S rRNA.</text>
</comment>
<comment type="subunit">
    <text evidence="1">Monomer. Binds 30S ribosomal subunits, but not 50S ribosomal subunits or 70S ribosomes.</text>
</comment>
<comment type="subcellular location">
    <subcellularLocation>
        <location evidence="1">Cytoplasm</location>
    </subcellularLocation>
</comment>
<comment type="similarity">
    <text evidence="1">Belongs to the RbfA family.</text>
</comment>
<proteinExistence type="inferred from homology"/>
<dbReference type="EMBL" id="CP001287">
    <property type="protein sequence ID" value="ACK65283.1"/>
    <property type="molecule type" value="Genomic_DNA"/>
</dbReference>
<dbReference type="RefSeq" id="WP_012594557.1">
    <property type="nucleotide sequence ID" value="NC_011726.1"/>
</dbReference>
<dbReference type="SMR" id="B7K2E7"/>
<dbReference type="STRING" id="41431.PCC8801_1217"/>
<dbReference type="KEGG" id="cyp:PCC8801_1217"/>
<dbReference type="eggNOG" id="COG0858">
    <property type="taxonomic scope" value="Bacteria"/>
</dbReference>
<dbReference type="HOGENOM" id="CLU_089475_2_1_3"/>
<dbReference type="OrthoDB" id="307788at2"/>
<dbReference type="Proteomes" id="UP000008204">
    <property type="component" value="Chromosome"/>
</dbReference>
<dbReference type="GO" id="GO:0005829">
    <property type="term" value="C:cytosol"/>
    <property type="evidence" value="ECO:0007669"/>
    <property type="project" value="TreeGrafter"/>
</dbReference>
<dbReference type="GO" id="GO:0043024">
    <property type="term" value="F:ribosomal small subunit binding"/>
    <property type="evidence" value="ECO:0007669"/>
    <property type="project" value="TreeGrafter"/>
</dbReference>
<dbReference type="GO" id="GO:0030490">
    <property type="term" value="P:maturation of SSU-rRNA"/>
    <property type="evidence" value="ECO:0007669"/>
    <property type="project" value="UniProtKB-UniRule"/>
</dbReference>
<dbReference type="Gene3D" id="3.30.300.20">
    <property type="match status" value="1"/>
</dbReference>
<dbReference type="HAMAP" id="MF_00003">
    <property type="entry name" value="RbfA"/>
    <property type="match status" value="1"/>
</dbReference>
<dbReference type="InterPro" id="IPR015946">
    <property type="entry name" value="KH_dom-like_a/b"/>
</dbReference>
<dbReference type="InterPro" id="IPR000238">
    <property type="entry name" value="RbfA"/>
</dbReference>
<dbReference type="InterPro" id="IPR023799">
    <property type="entry name" value="RbfA_dom_sf"/>
</dbReference>
<dbReference type="InterPro" id="IPR020053">
    <property type="entry name" value="Ribosome-bd_factorA_CS"/>
</dbReference>
<dbReference type="NCBIfam" id="TIGR00082">
    <property type="entry name" value="rbfA"/>
    <property type="match status" value="1"/>
</dbReference>
<dbReference type="PANTHER" id="PTHR33515">
    <property type="entry name" value="RIBOSOME-BINDING FACTOR A, CHLOROPLASTIC-RELATED"/>
    <property type="match status" value="1"/>
</dbReference>
<dbReference type="PANTHER" id="PTHR33515:SF1">
    <property type="entry name" value="RIBOSOME-BINDING FACTOR A, CHLOROPLASTIC-RELATED"/>
    <property type="match status" value="1"/>
</dbReference>
<dbReference type="Pfam" id="PF02033">
    <property type="entry name" value="RBFA"/>
    <property type="match status" value="1"/>
</dbReference>
<dbReference type="SUPFAM" id="SSF89919">
    <property type="entry name" value="Ribosome-binding factor A, RbfA"/>
    <property type="match status" value="1"/>
</dbReference>
<dbReference type="PROSITE" id="PS01319">
    <property type="entry name" value="RBFA"/>
    <property type="match status" value="1"/>
</dbReference>
<protein>
    <recommendedName>
        <fullName evidence="1">Ribosome-binding factor A</fullName>
    </recommendedName>
</protein>
<gene>
    <name evidence="1" type="primary">rbfA</name>
    <name type="ordered locus">PCC8801_1217</name>
</gene>